<name>CH10_AERSA</name>
<protein>
    <recommendedName>
        <fullName evidence="1">Co-chaperonin GroES</fullName>
    </recommendedName>
    <alternativeName>
        <fullName evidence="1">10 kDa chaperonin</fullName>
    </alternativeName>
    <alternativeName>
        <fullName evidence="1">Chaperonin-10</fullName>
        <shortName evidence="1">Cpn10</shortName>
    </alternativeName>
</protein>
<feature type="chain" id="PRO_0000174681" description="Co-chaperonin GroES">
    <location>
        <begin position="1"/>
        <end position="97"/>
    </location>
</feature>
<proteinExistence type="inferred from homology"/>
<evidence type="ECO:0000255" key="1">
    <source>
        <dbReference type="HAMAP-Rule" id="MF_00580"/>
    </source>
</evidence>
<reference key="1">
    <citation type="submission" date="1997-10" db="EMBL/GenBank/DDBJ databases">
        <title>Aeromonas salmonicida groE operon.</title>
        <authorList>
            <person name="Hanniffy S.B."/>
            <person name="Powell R."/>
        </authorList>
    </citation>
    <scope>NUCLEOTIDE SEQUENCE [GENOMIC DNA]</scope>
    <source>
        <strain>NCIMB 835 / JCM 8195</strain>
    </source>
</reference>
<accession>O68308</accession>
<organism>
    <name type="scientific">Aeromonas salmonicida</name>
    <dbReference type="NCBI Taxonomy" id="645"/>
    <lineage>
        <taxon>Bacteria</taxon>
        <taxon>Pseudomonadati</taxon>
        <taxon>Pseudomonadota</taxon>
        <taxon>Gammaproteobacteria</taxon>
        <taxon>Aeromonadales</taxon>
        <taxon>Aeromonadaceae</taxon>
        <taxon>Aeromonas</taxon>
    </lineage>
</organism>
<keyword id="KW-0143">Chaperone</keyword>
<keyword id="KW-0963">Cytoplasm</keyword>
<comment type="function">
    <text evidence="1">Together with the chaperonin GroEL, plays an essential role in assisting protein folding. The GroEL-GroES system forms a nano-cage that allows encapsulation of the non-native substrate proteins and provides a physical environment optimized to promote and accelerate protein folding. GroES binds to the apical surface of the GroEL ring, thereby capping the opening of the GroEL channel.</text>
</comment>
<comment type="subunit">
    <text evidence="1">Heptamer of 7 subunits arranged in a ring. Interacts with the chaperonin GroEL.</text>
</comment>
<comment type="subcellular location">
    <subcellularLocation>
        <location evidence="1">Cytoplasm</location>
    </subcellularLocation>
</comment>
<comment type="similarity">
    <text evidence="1">Belongs to the GroES chaperonin family.</text>
</comment>
<sequence length="97" mass="10253">MKIRPLHDRVIIKRIEAEAKSAGGIILAGTAAQKSTRGEVLAVGTGRILDNGDVKALAVKVGDKVIFNEGYGVKTEKLDGQDVLILSETDILAIVEA</sequence>
<dbReference type="EMBL" id="AF030975">
    <property type="protein sequence ID" value="AAC09225.1"/>
    <property type="molecule type" value="Genomic_DNA"/>
</dbReference>
<dbReference type="SMR" id="O68308"/>
<dbReference type="STRING" id="1233098.GCA_000315855_02978"/>
<dbReference type="GO" id="GO:0005737">
    <property type="term" value="C:cytoplasm"/>
    <property type="evidence" value="ECO:0007669"/>
    <property type="project" value="UniProtKB-SubCell"/>
</dbReference>
<dbReference type="GO" id="GO:0005524">
    <property type="term" value="F:ATP binding"/>
    <property type="evidence" value="ECO:0007669"/>
    <property type="project" value="InterPro"/>
</dbReference>
<dbReference type="GO" id="GO:0046872">
    <property type="term" value="F:metal ion binding"/>
    <property type="evidence" value="ECO:0007669"/>
    <property type="project" value="TreeGrafter"/>
</dbReference>
<dbReference type="GO" id="GO:0044183">
    <property type="term" value="F:protein folding chaperone"/>
    <property type="evidence" value="ECO:0007669"/>
    <property type="project" value="InterPro"/>
</dbReference>
<dbReference type="GO" id="GO:0051087">
    <property type="term" value="F:protein-folding chaperone binding"/>
    <property type="evidence" value="ECO:0007669"/>
    <property type="project" value="TreeGrafter"/>
</dbReference>
<dbReference type="GO" id="GO:0051082">
    <property type="term" value="F:unfolded protein binding"/>
    <property type="evidence" value="ECO:0007669"/>
    <property type="project" value="TreeGrafter"/>
</dbReference>
<dbReference type="GO" id="GO:0051085">
    <property type="term" value="P:chaperone cofactor-dependent protein refolding"/>
    <property type="evidence" value="ECO:0007669"/>
    <property type="project" value="TreeGrafter"/>
</dbReference>
<dbReference type="CDD" id="cd00320">
    <property type="entry name" value="cpn10"/>
    <property type="match status" value="1"/>
</dbReference>
<dbReference type="FunFam" id="2.30.33.40:FF:000001">
    <property type="entry name" value="10 kDa chaperonin"/>
    <property type="match status" value="1"/>
</dbReference>
<dbReference type="Gene3D" id="2.30.33.40">
    <property type="entry name" value="GroES chaperonin"/>
    <property type="match status" value="1"/>
</dbReference>
<dbReference type="HAMAP" id="MF_00580">
    <property type="entry name" value="CH10"/>
    <property type="match status" value="1"/>
</dbReference>
<dbReference type="InterPro" id="IPR020818">
    <property type="entry name" value="Chaperonin_GroES"/>
</dbReference>
<dbReference type="InterPro" id="IPR037124">
    <property type="entry name" value="Chaperonin_GroES_sf"/>
</dbReference>
<dbReference type="InterPro" id="IPR018369">
    <property type="entry name" value="Chaprnonin_Cpn10_CS"/>
</dbReference>
<dbReference type="InterPro" id="IPR011032">
    <property type="entry name" value="GroES-like_sf"/>
</dbReference>
<dbReference type="NCBIfam" id="NF001526">
    <property type="entry name" value="PRK00364.1-1"/>
    <property type="match status" value="1"/>
</dbReference>
<dbReference type="NCBIfam" id="NF001527">
    <property type="entry name" value="PRK00364.1-2"/>
    <property type="match status" value="1"/>
</dbReference>
<dbReference type="NCBIfam" id="NF001531">
    <property type="entry name" value="PRK00364.2-2"/>
    <property type="match status" value="1"/>
</dbReference>
<dbReference type="PANTHER" id="PTHR10772">
    <property type="entry name" value="10 KDA HEAT SHOCK PROTEIN"/>
    <property type="match status" value="1"/>
</dbReference>
<dbReference type="PANTHER" id="PTHR10772:SF58">
    <property type="entry name" value="CO-CHAPERONIN GROES"/>
    <property type="match status" value="1"/>
</dbReference>
<dbReference type="Pfam" id="PF00166">
    <property type="entry name" value="Cpn10"/>
    <property type="match status" value="1"/>
</dbReference>
<dbReference type="PRINTS" id="PR00297">
    <property type="entry name" value="CHAPERONIN10"/>
</dbReference>
<dbReference type="SMART" id="SM00883">
    <property type="entry name" value="Cpn10"/>
    <property type="match status" value="1"/>
</dbReference>
<dbReference type="SUPFAM" id="SSF50129">
    <property type="entry name" value="GroES-like"/>
    <property type="match status" value="1"/>
</dbReference>
<dbReference type="PROSITE" id="PS00681">
    <property type="entry name" value="CHAPERONINS_CPN10"/>
    <property type="match status" value="1"/>
</dbReference>
<gene>
    <name evidence="1" type="primary">groES</name>
    <name evidence="1" type="synonym">groS</name>
</gene>